<name>PROB_STRE4</name>
<reference key="1">
    <citation type="journal article" date="2009" name="PLoS Pathog.">
        <title>Genomic evidence for the evolution of Streptococcus equi: host restriction, increased virulence, and genetic exchange with human pathogens.</title>
        <authorList>
            <person name="Holden M.T.G."/>
            <person name="Heather Z."/>
            <person name="Paillot R."/>
            <person name="Steward K.F."/>
            <person name="Webb K."/>
            <person name="Ainslie F."/>
            <person name="Jourdan T."/>
            <person name="Bason N.C."/>
            <person name="Holroyd N.E."/>
            <person name="Mungall K."/>
            <person name="Quail M.A."/>
            <person name="Sanders M."/>
            <person name="Simmonds M."/>
            <person name="Willey D."/>
            <person name="Brooks K."/>
            <person name="Aanensen D.M."/>
            <person name="Spratt B.G."/>
            <person name="Jolley K.A."/>
            <person name="Maiden M.C.J."/>
            <person name="Kehoe M."/>
            <person name="Chanter N."/>
            <person name="Bentley S.D."/>
            <person name="Robinson C."/>
            <person name="Maskell D.J."/>
            <person name="Parkhill J."/>
            <person name="Waller A.S."/>
        </authorList>
    </citation>
    <scope>NUCLEOTIDE SEQUENCE [LARGE SCALE GENOMIC DNA]</scope>
    <source>
        <strain>4047</strain>
    </source>
</reference>
<evidence type="ECO:0000255" key="1">
    <source>
        <dbReference type="HAMAP-Rule" id="MF_00456"/>
    </source>
</evidence>
<proteinExistence type="inferred from homology"/>
<dbReference type="EC" id="2.7.2.11" evidence="1"/>
<dbReference type="EMBL" id="FM204883">
    <property type="protein sequence ID" value="CAW94944.1"/>
    <property type="molecule type" value="Genomic_DNA"/>
</dbReference>
<dbReference type="RefSeq" id="WP_012516180.1">
    <property type="nucleotide sequence ID" value="NC_012471.1"/>
</dbReference>
<dbReference type="SMR" id="C0M7B1"/>
<dbReference type="KEGG" id="seu:SEQ_1808"/>
<dbReference type="HOGENOM" id="CLU_025400_0_2_9"/>
<dbReference type="OrthoDB" id="9804434at2"/>
<dbReference type="UniPathway" id="UPA00098">
    <property type="reaction ID" value="UER00359"/>
</dbReference>
<dbReference type="Proteomes" id="UP000001365">
    <property type="component" value="Chromosome"/>
</dbReference>
<dbReference type="GO" id="GO:0005829">
    <property type="term" value="C:cytosol"/>
    <property type="evidence" value="ECO:0007669"/>
    <property type="project" value="TreeGrafter"/>
</dbReference>
<dbReference type="GO" id="GO:0005524">
    <property type="term" value="F:ATP binding"/>
    <property type="evidence" value="ECO:0007669"/>
    <property type="project" value="UniProtKB-KW"/>
</dbReference>
<dbReference type="GO" id="GO:0004349">
    <property type="term" value="F:glutamate 5-kinase activity"/>
    <property type="evidence" value="ECO:0007669"/>
    <property type="project" value="UniProtKB-UniRule"/>
</dbReference>
<dbReference type="GO" id="GO:0055129">
    <property type="term" value="P:L-proline biosynthetic process"/>
    <property type="evidence" value="ECO:0007669"/>
    <property type="project" value="UniProtKB-UniRule"/>
</dbReference>
<dbReference type="CDD" id="cd04242">
    <property type="entry name" value="AAK_G5K_ProB"/>
    <property type="match status" value="1"/>
</dbReference>
<dbReference type="FunFam" id="3.40.1160.10:FF:000006">
    <property type="entry name" value="Glutamate 5-kinase"/>
    <property type="match status" value="1"/>
</dbReference>
<dbReference type="Gene3D" id="3.40.1160.10">
    <property type="entry name" value="Acetylglutamate kinase-like"/>
    <property type="match status" value="1"/>
</dbReference>
<dbReference type="HAMAP" id="MF_00456">
    <property type="entry name" value="ProB"/>
    <property type="match status" value="1"/>
</dbReference>
<dbReference type="InterPro" id="IPR036393">
    <property type="entry name" value="AceGlu_kinase-like_sf"/>
</dbReference>
<dbReference type="InterPro" id="IPR001048">
    <property type="entry name" value="Asp/Glu/Uridylate_kinase"/>
</dbReference>
<dbReference type="InterPro" id="IPR041739">
    <property type="entry name" value="G5K_ProB"/>
</dbReference>
<dbReference type="InterPro" id="IPR001057">
    <property type="entry name" value="Glu/AcGlu_kinase"/>
</dbReference>
<dbReference type="InterPro" id="IPR011529">
    <property type="entry name" value="Glu_5kinase"/>
</dbReference>
<dbReference type="InterPro" id="IPR005715">
    <property type="entry name" value="Glu_5kinase/COase_Synthase"/>
</dbReference>
<dbReference type="InterPro" id="IPR019797">
    <property type="entry name" value="Glutamate_5-kinase_CS"/>
</dbReference>
<dbReference type="NCBIfam" id="TIGR01027">
    <property type="entry name" value="proB"/>
    <property type="match status" value="1"/>
</dbReference>
<dbReference type="PANTHER" id="PTHR43654">
    <property type="entry name" value="GLUTAMATE 5-KINASE"/>
    <property type="match status" value="1"/>
</dbReference>
<dbReference type="PANTHER" id="PTHR43654:SF1">
    <property type="entry name" value="ISOPENTENYL PHOSPHATE KINASE"/>
    <property type="match status" value="1"/>
</dbReference>
<dbReference type="Pfam" id="PF00696">
    <property type="entry name" value="AA_kinase"/>
    <property type="match status" value="1"/>
</dbReference>
<dbReference type="PIRSF" id="PIRSF000729">
    <property type="entry name" value="GK"/>
    <property type="match status" value="1"/>
</dbReference>
<dbReference type="PRINTS" id="PR00474">
    <property type="entry name" value="GLU5KINASE"/>
</dbReference>
<dbReference type="SUPFAM" id="SSF53633">
    <property type="entry name" value="Carbamate kinase-like"/>
    <property type="match status" value="1"/>
</dbReference>
<dbReference type="PROSITE" id="PS00902">
    <property type="entry name" value="GLUTAMATE_5_KINASE"/>
    <property type="match status" value="1"/>
</dbReference>
<keyword id="KW-0028">Amino-acid biosynthesis</keyword>
<keyword id="KW-0067">ATP-binding</keyword>
<keyword id="KW-0963">Cytoplasm</keyword>
<keyword id="KW-0418">Kinase</keyword>
<keyword id="KW-0547">Nucleotide-binding</keyword>
<keyword id="KW-0641">Proline biosynthesis</keyword>
<keyword id="KW-0808">Transferase</keyword>
<organism>
    <name type="scientific">Streptococcus equi subsp. equi (strain 4047)</name>
    <dbReference type="NCBI Taxonomy" id="553482"/>
    <lineage>
        <taxon>Bacteria</taxon>
        <taxon>Bacillati</taxon>
        <taxon>Bacillota</taxon>
        <taxon>Bacilli</taxon>
        <taxon>Lactobacillales</taxon>
        <taxon>Streptococcaceae</taxon>
        <taxon>Streptococcus</taxon>
    </lineage>
</organism>
<feature type="chain" id="PRO_1000193703" description="Glutamate 5-kinase">
    <location>
        <begin position="1"/>
        <end position="272"/>
    </location>
</feature>
<feature type="binding site" evidence="1">
    <location>
        <position position="15"/>
    </location>
    <ligand>
        <name>ATP</name>
        <dbReference type="ChEBI" id="CHEBI:30616"/>
    </ligand>
</feature>
<feature type="binding site" evidence="1">
    <location>
        <position position="55"/>
    </location>
    <ligand>
        <name>substrate</name>
    </ligand>
</feature>
<feature type="binding site" evidence="1">
    <location>
        <position position="142"/>
    </location>
    <ligand>
        <name>substrate</name>
    </ligand>
</feature>
<feature type="binding site" evidence="1">
    <location>
        <position position="158"/>
    </location>
    <ligand>
        <name>substrate</name>
    </ligand>
</feature>
<feature type="binding site" evidence="1">
    <location>
        <begin position="178"/>
        <end position="179"/>
    </location>
    <ligand>
        <name>ATP</name>
        <dbReference type="ChEBI" id="CHEBI:30616"/>
    </ligand>
</feature>
<feature type="binding site" evidence="1">
    <location>
        <begin position="220"/>
        <end position="226"/>
    </location>
    <ligand>
        <name>ATP</name>
        <dbReference type="ChEBI" id="CHEBI:30616"/>
    </ligand>
</feature>
<accession>C0M7B1</accession>
<protein>
    <recommendedName>
        <fullName evidence="1">Glutamate 5-kinase</fullName>
        <ecNumber evidence="1">2.7.2.11</ecNumber>
    </recommendedName>
    <alternativeName>
        <fullName evidence="1">Gamma-glutamyl kinase</fullName>
        <shortName evidence="1">GK</shortName>
    </alternativeName>
</protein>
<sequence>MMKRQFEDVKRIVIKIGTSSLVLANGKINLEKIDHLAFVISSLMNKGKEVILVSSGAMGFGLDLLKMAKRPSQLAKQQAVSSVGQVAMMSLYSQIFAHYQTTVSQILLTRDVVVFPESLANVTNAFESLISLGIVPIVNENDAVSVDEMDHSTKFGDNDRLSAIVARITRADLLIMLSDIDGLFDKNPTIYEDARLRSHVTEITEDIIASAGGAGSRFGTGGMLSKIQSAQMMFEHQGQMILMNGANPRDILRVLEGEKLGTWFKQIERGDA</sequence>
<gene>
    <name evidence="1" type="primary">proB</name>
    <name type="ordered locus">SEQ_1808</name>
</gene>
<comment type="function">
    <text evidence="1">Catalyzes the transfer of a phosphate group to glutamate to form L-glutamate 5-phosphate.</text>
</comment>
<comment type="catalytic activity">
    <reaction evidence="1">
        <text>L-glutamate + ATP = L-glutamyl 5-phosphate + ADP</text>
        <dbReference type="Rhea" id="RHEA:14877"/>
        <dbReference type="ChEBI" id="CHEBI:29985"/>
        <dbReference type="ChEBI" id="CHEBI:30616"/>
        <dbReference type="ChEBI" id="CHEBI:58274"/>
        <dbReference type="ChEBI" id="CHEBI:456216"/>
        <dbReference type="EC" id="2.7.2.11"/>
    </reaction>
</comment>
<comment type="pathway">
    <text evidence="1">Amino-acid biosynthesis; L-proline biosynthesis; L-glutamate 5-semialdehyde from L-glutamate: step 1/2.</text>
</comment>
<comment type="subcellular location">
    <subcellularLocation>
        <location evidence="1">Cytoplasm</location>
    </subcellularLocation>
</comment>
<comment type="similarity">
    <text evidence="1">Belongs to the glutamate 5-kinase family.</text>
</comment>